<evidence type="ECO:0000255" key="1">
    <source>
        <dbReference type="HAMAP-Rule" id="MF_00375"/>
    </source>
</evidence>
<gene>
    <name evidence="1" type="primary">hemL</name>
    <name type="ordered locus">pc1748</name>
</gene>
<organism>
    <name type="scientific">Protochlamydia amoebophila (strain UWE25)</name>
    <dbReference type="NCBI Taxonomy" id="264201"/>
    <lineage>
        <taxon>Bacteria</taxon>
        <taxon>Pseudomonadati</taxon>
        <taxon>Chlamydiota</taxon>
        <taxon>Chlamydiia</taxon>
        <taxon>Parachlamydiales</taxon>
        <taxon>Parachlamydiaceae</taxon>
        <taxon>Candidatus Protochlamydia</taxon>
    </lineage>
</organism>
<accession>Q6MAC7</accession>
<sequence length="432" mass="47738">MISRPISQQIYSNLNRVIPGGVNSPVRACANMGQIPMIIDHAYRDTLVDVDGKTYVDYCGSWGALIHGHAHPSILEAVQQRMKKGTSFGITTSIEGELAQEVIKLIDSVEKIRFVSSGTEATMSAVRLARGYTNKEFIVKFNGNYHGHADFFLVQAGSGVLEVSPSASSAGIPADIVKQTLCLPYNDIEACRQIFHHSDYRHKIAAIILEPIAGNMGVIPASQEFMQFLRKETLAMGALLIFDEVMTGFRVALKGAQDIYPVEPDLTCFGKIIGGGFPAAAFGGREEIMNLLAPLGSVYQAGTLSGNPIAMEAGLQSLRLIQQPGFYEELHRKTDLLLNPIKETIKKNNWPICIQQAGSMFTLFFCKNRVRNLEDALKANTTIFANFFRKLFDQGIYIPPSQHEAWFISQAHEESNLIKTQSAILTFLEENF</sequence>
<name>GSA_PARUW</name>
<protein>
    <recommendedName>
        <fullName evidence="1">Glutamate-1-semialdehyde 2,1-aminomutase</fullName>
        <shortName evidence="1">GSA</shortName>
        <ecNumber evidence="1">5.4.3.8</ecNumber>
    </recommendedName>
    <alternativeName>
        <fullName evidence="1">Glutamate-1-semialdehyde aminotransferase</fullName>
        <shortName evidence="1">GSA-AT</shortName>
    </alternativeName>
</protein>
<comment type="catalytic activity">
    <reaction evidence="1">
        <text>(S)-4-amino-5-oxopentanoate = 5-aminolevulinate</text>
        <dbReference type="Rhea" id="RHEA:14265"/>
        <dbReference type="ChEBI" id="CHEBI:57501"/>
        <dbReference type="ChEBI" id="CHEBI:356416"/>
        <dbReference type="EC" id="5.4.3.8"/>
    </reaction>
</comment>
<comment type="cofactor">
    <cofactor evidence="1">
        <name>pyridoxal 5'-phosphate</name>
        <dbReference type="ChEBI" id="CHEBI:597326"/>
    </cofactor>
</comment>
<comment type="pathway">
    <text evidence="1">Porphyrin-containing compound metabolism; protoporphyrin-IX biosynthesis; 5-aminolevulinate from L-glutamyl-tRNA(Glu): step 2/2.</text>
</comment>
<comment type="subunit">
    <text evidence="1">Homodimer.</text>
</comment>
<comment type="subcellular location">
    <subcellularLocation>
        <location evidence="1">Cytoplasm</location>
    </subcellularLocation>
</comment>
<comment type="similarity">
    <text evidence="1">Belongs to the class-III pyridoxal-phosphate-dependent aminotransferase family. HemL subfamily.</text>
</comment>
<keyword id="KW-0963">Cytoplasm</keyword>
<keyword id="KW-0413">Isomerase</keyword>
<keyword id="KW-0627">Porphyrin biosynthesis</keyword>
<keyword id="KW-0663">Pyridoxal phosphate</keyword>
<keyword id="KW-1185">Reference proteome</keyword>
<reference key="1">
    <citation type="journal article" date="2004" name="Science">
        <title>Illuminating the evolutionary history of chlamydiae.</title>
        <authorList>
            <person name="Horn M."/>
            <person name="Collingro A."/>
            <person name="Schmitz-Esser S."/>
            <person name="Beier C.L."/>
            <person name="Purkhold U."/>
            <person name="Fartmann B."/>
            <person name="Brandt P."/>
            <person name="Nyakatura G.J."/>
            <person name="Droege M."/>
            <person name="Frishman D."/>
            <person name="Rattei T."/>
            <person name="Mewes H.-W."/>
            <person name="Wagner M."/>
        </authorList>
    </citation>
    <scope>NUCLEOTIDE SEQUENCE [LARGE SCALE GENOMIC DNA]</scope>
    <source>
        <strain>UWE25</strain>
    </source>
</reference>
<proteinExistence type="inferred from homology"/>
<dbReference type="EC" id="5.4.3.8" evidence="1"/>
<dbReference type="EMBL" id="BX908798">
    <property type="protein sequence ID" value="CAF24472.1"/>
    <property type="molecule type" value="Genomic_DNA"/>
</dbReference>
<dbReference type="RefSeq" id="WP_011176293.1">
    <property type="nucleotide sequence ID" value="NC_005861.2"/>
</dbReference>
<dbReference type="SMR" id="Q6MAC7"/>
<dbReference type="STRING" id="264201.pc1748"/>
<dbReference type="KEGG" id="pcu:PC_RS08370"/>
<dbReference type="eggNOG" id="COG0001">
    <property type="taxonomic scope" value="Bacteria"/>
</dbReference>
<dbReference type="HOGENOM" id="CLU_016922_1_5_0"/>
<dbReference type="OrthoDB" id="9807885at2"/>
<dbReference type="UniPathway" id="UPA00251">
    <property type="reaction ID" value="UER00317"/>
</dbReference>
<dbReference type="Proteomes" id="UP000000529">
    <property type="component" value="Chromosome"/>
</dbReference>
<dbReference type="GO" id="GO:0005737">
    <property type="term" value="C:cytoplasm"/>
    <property type="evidence" value="ECO:0007669"/>
    <property type="project" value="UniProtKB-SubCell"/>
</dbReference>
<dbReference type="GO" id="GO:0042286">
    <property type="term" value="F:glutamate-1-semialdehyde 2,1-aminomutase activity"/>
    <property type="evidence" value="ECO:0007669"/>
    <property type="project" value="UniProtKB-UniRule"/>
</dbReference>
<dbReference type="GO" id="GO:0030170">
    <property type="term" value="F:pyridoxal phosphate binding"/>
    <property type="evidence" value="ECO:0007669"/>
    <property type="project" value="InterPro"/>
</dbReference>
<dbReference type="GO" id="GO:0008483">
    <property type="term" value="F:transaminase activity"/>
    <property type="evidence" value="ECO:0007669"/>
    <property type="project" value="InterPro"/>
</dbReference>
<dbReference type="GO" id="GO:0006782">
    <property type="term" value="P:protoporphyrinogen IX biosynthetic process"/>
    <property type="evidence" value="ECO:0007669"/>
    <property type="project" value="UniProtKB-UniRule"/>
</dbReference>
<dbReference type="CDD" id="cd00610">
    <property type="entry name" value="OAT_like"/>
    <property type="match status" value="1"/>
</dbReference>
<dbReference type="FunFam" id="3.40.640.10:FF:000021">
    <property type="entry name" value="Glutamate-1-semialdehyde 2,1-aminomutase"/>
    <property type="match status" value="1"/>
</dbReference>
<dbReference type="Gene3D" id="3.90.1150.10">
    <property type="entry name" value="Aspartate Aminotransferase, domain 1"/>
    <property type="match status" value="1"/>
</dbReference>
<dbReference type="Gene3D" id="3.40.640.10">
    <property type="entry name" value="Type I PLP-dependent aspartate aminotransferase-like (Major domain)"/>
    <property type="match status" value="1"/>
</dbReference>
<dbReference type="HAMAP" id="MF_00375">
    <property type="entry name" value="HemL_aminotrans_3"/>
    <property type="match status" value="1"/>
</dbReference>
<dbReference type="InterPro" id="IPR004639">
    <property type="entry name" value="4pyrrol_synth_GluAld_NH2Trfase"/>
</dbReference>
<dbReference type="InterPro" id="IPR005814">
    <property type="entry name" value="Aminotrans_3"/>
</dbReference>
<dbReference type="InterPro" id="IPR049704">
    <property type="entry name" value="Aminotrans_3_PPA_site"/>
</dbReference>
<dbReference type="InterPro" id="IPR015424">
    <property type="entry name" value="PyrdxlP-dep_Trfase"/>
</dbReference>
<dbReference type="InterPro" id="IPR015421">
    <property type="entry name" value="PyrdxlP-dep_Trfase_major"/>
</dbReference>
<dbReference type="InterPro" id="IPR015422">
    <property type="entry name" value="PyrdxlP-dep_Trfase_small"/>
</dbReference>
<dbReference type="NCBIfam" id="TIGR00713">
    <property type="entry name" value="hemL"/>
    <property type="match status" value="1"/>
</dbReference>
<dbReference type="NCBIfam" id="NF000818">
    <property type="entry name" value="PRK00062.1"/>
    <property type="match status" value="1"/>
</dbReference>
<dbReference type="PANTHER" id="PTHR43713">
    <property type="entry name" value="GLUTAMATE-1-SEMIALDEHYDE 2,1-AMINOMUTASE"/>
    <property type="match status" value="1"/>
</dbReference>
<dbReference type="PANTHER" id="PTHR43713:SF3">
    <property type="entry name" value="GLUTAMATE-1-SEMIALDEHYDE 2,1-AMINOMUTASE 1, CHLOROPLASTIC-RELATED"/>
    <property type="match status" value="1"/>
</dbReference>
<dbReference type="Pfam" id="PF00202">
    <property type="entry name" value="Aminotran_3"/>
    <property type="match status" value="1"/>
</dbReference>
<dbReference type="SUPFAM" id="SSF53383">
    <property type="entry name" value="PLP-dependent transferases"/>
    <property type="match status" value="1"/>
</dbReference>
<dbReference type="PROSITE" id="PS00600">
    <property type="entry name" value="AA_TRANSFER_CLASS_3"/>
    <property type="match status" value="1"/>
</dbReference>
<feature type="chain" id="PRO_0000243593" description="Glutamate-1-semialdehyde 2,1-aminomutase">
    <location>
        <begin position="1"/>
        <end position="432"/>
    </location>
</feature>
<feature type="modified residue" description="N6-(pyridoxal phosphate)lysine" evidence="1">
    <location>
        <position position="271"/>
    </location>
</feature>